<gene>
    <name evidence="1" type="primary">hrcA</name>
    <name type="ordered locus">RPA0330</name>
</gene>
<accession>Q6NCY7</accession>
<keyword id="KW-0678">Repressor</keyword>
<keyword id="KW-0346">Stress response</keyword>
<keyword id="KW-0804">Transcription</keyword>
<keyword id="KW-0805">Transcription regulation</keyword>
<feature type="chain" id="PRO_0000182524" description="Heat-inducible transcription repressor HrcA">
    <location>
        <begin position="1"/>
        <end position="362"/>
    </location>
</feature>
<proteinExistence type="inferred from homology"/>
<evidence type="ECO:0000255" key="1">
    <source>
        <dbReference type="HAMAP-Rule" id="MF_00081"/>
    </source>
</evidence>
<reference key="1">
    <citation type="journal article" date="2004" name="Nat. Biotechnol.">
        <title>Complete genome sequence of the metabolically versatile photosynthetic bacterium Rhodopseudomonas palustris.</title>
        <authorList>
            <person name="Larimer F.W."/>
            <person name="Chain P."/>
            <person name="Hauser L."/>
            <person name="Lamerdin J.E."/>
            <person name="Malfatti S."/>
            <person name="Do L."/>
            <person name="Land M.L."/>
            <person name="Pelletier D.A."/>
            <person name="Beatty J.T."/>
            <person name="Lang A.S."/>
            <person name="Tabita F.R."/>
            <person name="Gibson J.L."/>
            <person name="Hanson T.E."/>
            <person name="Bobst C."/>
            <person name="Torres y Torres J.L."/>
            <person name="Peres C."/>
            <person name="Harrison F.H."/>
            <person name="Gibson J."/>
            <person name="Harwood C.S."/>
        </authorList>
    </citation>
    <scope>NUCLEOTIDE SEQUENCE [LARGE SCALE GENOMIC DNA]</scope>
    <source>
        <strain>ATCC BAA-98 / CGA009</strain>
    </source>
</reference>
<sequence>MAQHDPIGLIAPNAGLAQLNERSREIFRQIVESYLATGEPVGSRNISRLISVPLSPASVRNVMADLEQLGLIYAPHTSAGRLPTELGLRFFVDALMQIGDLTEPERQSIQAQLSSVGRAHTVEAALGEALTRLSGLTRAAAVVLTAKANVRLKHIEFVRLEPERALVILVAEDGQVENRVLTLPPGVPSSALIEAANYLNARIRGRTLAEARLELESLMVQNKAELDQLTQKVIAAGIASWSGGDGEDRQLIVRGHANLLEDLHALDDLERVRLLFDDLETKRGVIDLLGRAESADGVRIFIGSENKLFSLSGSSTIIAPYSDGAGHIVGVLGVIGPTRLNYARVIPMVDYTARIVSRMLGG</sequence>
<organism>
    <name type="scientific">Rhodopseudomonas palustris (strain ATCC BAA-98 / CGA009)</name>
    <dbReference type="NCBI Taxonomy" id="258594"/>
    <lineage>
        <taxon>Bacteria</taxon>
        <taxon>Pseudomonadati</taxon>
        <taxon>Pseudomonadota</taxon>
        <taxon>Alphaproteobacteria</taxon>
        <taxon>Hyphomicrobiales</taxon>
        <taxon>Nitrobacteraceae</taxon>
        <taxon>Rhodopseudomonas</taxon>
    </lineage>
</organism>
<protein>
    <recommendedName>
        <fullName evidence="1">Heat-inducible transcription repressor HrcA</fullName>
    </recommendedName>
</protein>
<dbReference type="EMBL" id="BX572594">
    <property type="protein sequence ID" value="CAE25774.1"/>
    <property type="molecule type" value="Genomic_DNA"/>
</dbReference>
<dbReference type="RefSeq" id="WP_011155898.1">
    <property type="nucleotide sequence ID" value="NZ_CP116810.1"/>
</dbReference>
<dbReference type="SMR" id="Q6NCY7"/>
<dbReference type="STRING" id="258594.RPA0330"/>
<dbReference type="GeneID" id="66891341"/>
<dbReference type="eggNOG" id="COG1420">
    <property type="taxonomic scope" value="Bacteria"/>
</dbReference>
<dbReference type="HOGENOM" id="CLU_050019_0_0_5"/>
<dbReference type="PhylomeDB" id="Q6NCY7"/>
<dbReference type="GO" id="GO:0003677">
    <property type="term" value="F:DNA binding"/>
    <property type="evidence" value="ECO:0007669"/>
    <property type="project" value="InterPro"/>
</dbReference>
<dbReference type="GO" id="GO:0045892">
    <property type="term" value="P:negative regulation of DNA-templated transcription"/>
    <property type="evidence" value="ECO:0007669"/>
    <property type="project" value="UniProtKB-UniRule"/>
</dbReference>
<dbReference type="Gene3D" id="3.30.450.40">
    <property type="match status" value="1"/>
</dbReference>
<dbReference type="Gene3D" id="1.10.10.10">
    <property type="entry name" value="Winged helix-like DNA-binding domain superfamily/Winged helix DNA-binding domain"/>
    <property type="match status" value="1"/>
</dbReference>
<dbReference type="HAMAP" id="MF_00081">
    <property type="entry name" value="HrcA"/>
    <property type="match status" value="1"/>
</dbReference>
<dbReference type="InterPro" id="IPR029016">
    <property type="entry name" value="GAF-like_dom_sf"/>
</dbReference>
<dbReference type="InterPro" id="IPR002571">
    <property type="entry name" value="HrcA"/>
</dbReference>
<dbReference type="InterPro" id="IPR021153">
    <property type="entry name" value="HrcA_C"/>
</dbReference>
<dbReference type="InterPro" id="IPR036388">
    <property type="entry name" value="WH-like_DNA-bd_sf"/>
</dbReference>
<dbReference type="InterPro" id="IPR036390">
    <property type="entry name" value="WH_DNA-bd_sf"/>
</dbReference>
<dbReference type="NCBIfam" id="TIGR00331">
    <property type="entry name" value="hrcA"/>
    <property type="match status" value="1"/>
</dbReference>
<dbReference type="PANTHER" id="PTHR34824">
    <property type="entry name" value="HEAT-INDUCIBLE TRANSCRIPTION REPRESSOR HRCA"/>
    <property type="match status" value="1"/>
</dbReference>
<dbReference type="PANTHER" id="PTHR34824:SF1">
    <property type="entry name" value="HEAT-INDUCIBLE TRANSCRIPTION REPRESSOR HRCA"/>
    <property type="match status" value="1"/>
</dbReference>
<dbReference type="Pfam" id="PF01628">
    <property type="entry name" value="HrcA"/>
    <property type="match status" value="1"/>
</dbReference>
<dbReference type="PIRSF" id="PIRSF005485">
    <property type="entry name" value="HrcA"/>
    <property type="match status" value="1"/>
</dbReference>
<dbReference type="SUPFAM" id="SSF55781">
    <property type="entry name" value="GAF domain-like"/>
    <property type="match status" value="1"/>
</dbReference>
<dbReference type="SUPFAM" id="SSF46785">
    <property type="entry name" value="Winged helix' DNA-binding domain"/>
    <property type="match status" value="1"/>
</dbReference>
<comment type="function">
    <text evidence="1">Negative regulator of class I heat shock genes (grpE-dnaK-dnaJ and groELS operons). Prevents heat-shock induction of these operons.</text>
</comment>
<comment type="similarity">
    <text evidence="1">Belongs to the HrcA family.</text>
</comment>
<name>HRCA_RHOPA</name>